<sequence length="649" mass="70346">MAALLELEGIRRSYQSGEEIVDVLQDVSLTINAGELVAIIGASGSGKSTLMNILGCLDKPSAGIYRVAGQNVDELDDDALAALRREHFGFIFQRYHLLPHLSAAHNVEVPAVYAGLGKHERRERANMLLTRLGLGDRVSYQPNQLSGGQQQRVSIARALMNGGQVILADEPTGALDSHSSVEVMAILKQLQQQGHTVIIVTHDPTVAAQAERVIEIKDGRIMADSGSKNEPVVAAAELMSLTPAAPSWQQLVGRFREALLMAWRAMSANKMRTALTMLGIIIGIASVVSILVVGDAAKQLVLADIRAIGTNTIDIYPGKDFGDDDPSTRQALVHDDMAALKAQSYVSAVSPSIGGSMRLRFGNIDVAASVLGVSDEYFRVFGMAMEQGAPITREQVERQAQTVVIDLNTQRRLFPHMKDVVGQVILVGNMPATVVGVVAEKKSMFGSNKALRVWVPYSTMANRLMGRSYFDSITIRIKEGYSSKEAEQQLVRLLTLRHGKKDIFTYNMDSLLQTAEKTTQTMQLFLTLVAVISLVVGGIGVMNIMLVSVTERTREIGIRMAVGARSSDVMQQFLIEAVLVCLIGGALGISLSFAIGLIVEMFLPNWRIAFPPMALFSAFLCSTVIGVVFGYLPARSAARLNPIDALARE</sequence>
<organism>
    <name type="scientific">Yersinia pestis bv. Antiqua (strain Nepal516)</name>
    <dbReference type="NCBI Taxonomy" id="377628"/>
    <lineage>
        <taxon>Bacteria</taxon>
        <taxon>Pseudomonadati</taxon>
        <taxon>Pseudomonadota</taxon>
        <taxon>Gammaproteobacteria</taxon>
        <taxon>Enterobacterales</taxon>
        <taxon>Yersiniaceae</taxon>
        <taxon>Yersinia</taxon>
    </lineage>
</organism>
<proteinExistence type="inferred from homology"/>
<gene>
    <name evidence="1" type="primary">macB2</name>
    <name type="ordered locus">YPN_2615</name>
    <name type="ORF">YP516_2949</name>
</gene>
<name>MACB2_YERPN</name>
<evidence type="ECO:0000255" key="1">
    <source>
        <dbReference type="HAMAP-Rule" id="MF_01720"/>
    </source>
</evidence>
<keyword id="KW-0046">Antibiotic resistance</keyword>
<keyword id="KW-0067">ATP-binding</keyword>
<keyword id="KW-0997">Cell inner membrane</keyword>
<keyword id="KW-1003">Cell membrane</keyword>
<keyword id="KW-0472">Membrane</keyword>
<keyword id="KW-0547">Nucleotide-binding</keyword>
<keyword id="KW-1278">Translocase</keyword>
<keyword id="KW-0812">Transmembrane</keyword>
<keyword id="KW-1133">Transmembrane helix</keyword>
<keyword id="KW-0813">Transport</keyword>
<dbReference type="EC" id="7.6.2.-" evidence="1"/>
<dbReference type="EMBL" id="CP000305">
    <property type="protein sequence ID" value="ABG18943.1"/>
    <property type="molecule type" value="Genomic_DNA"/>
</dbReference>
<dbReference type="EMBL" id="ACNQ01000017">
    <property type="protein sequence ID" value="EEO75063.1"/>
    <property type="molecule type" value="Genomic_DNA"/>
</dbReference>
<dbReference type="SMR" id="Q1CGD7"/>
<dbReference type="KEGG" id="ypn:YPN_2615"/>
<dbReference type="HOGENOM" id="CLU_000604_78_3_6"/>
<dbReference type="Proteomes" id="UP000008936">
    <property type="component" value="Chromosome"/>
</dbReference>
<dbReference type="GO" id="GO:0005886">
    <property type="term" value="C:plasma membrane"/>
    <property type="evidence" value="ECO:0007669"/>
    <property type="project" value="UniProtKB-SubCell"/>
</dbReference>
<dbReference type="GO" id="GO:0005524">
    <property type="term" value="F:ATP binding"/>
    <property type="evidence" value="ECO:0007669"/>
    <property type="project" value="UniProtKB-KW"/>
</dbReference>
<dbReference type="GO" id="GO:0016887">
    <property type="term" value="F:ATP hydrolysis activity"/>
    <property type="evidence" value="ECO:0007669"/>
    <property type="project" value="InterPro"/>
</dbReference>
<dbReference type="GO" id="GO:0022857">
    <property type="term" value="F:transmembrane transporter activity"/>
    <property type="evidence" value="ECO:0007669"/>
    <property type="project" value="TreeGrafter"/>
</dbReference>
<dbReference type="GO" id="GO:0046677">
    <property type="term" value="P:response to antibiotic"/>
    <property type="evidence" value="ECO:0007669"/>
    <property type="project" value="UniProtKB-KW"/>
</dbReference>
<dbReference type="CDD" id="cd03255">
    <property type="entry name" value="ABC_MJ0796_LolCDE_FtsE"/>
    <property type="match status" value="1"/>
</dbReference>
<dbReference type="FunFam" id="3.40.50.300:FF:000032">
    <property type="entry name" value="Export ABC transporter ATP-binding protein"/>
    <property type="match status" value="1"/>
</dbReference>
<dbReference type="Gene3D" id="3.40.50.300">
    <property type="entry name" value="P-loop containing nucleotide triphosphate hydrolases"/>
    <property type="match status" value="1"/>
</dbReference>
<dbReference type="InterPro" id="IPR003593">
    <property type="entry name" value="AAA+_ATPase"/>
</dbReference>
<dbReference type="InterPro" id="IPR003838">
    <property type="entry name" value="ABC3_permease_C"/>
</dbReference>
<dbReference type="InterPro" id="IPR003439">
    <property type="entry name" value="ABC_transporter-like_ATP-bd"/>
</dbReference>
<dbReference type="InterPro" id="IPR017871">
    <property type="entry name" value="ABC_transporter-like_CS"/>
</dbReference>
<dbReference type="InterPro" id="IPR017911">
    <property type="entry name" value="MacB-like_ATP-bd"/>
</dbReference>
<dbReference type="InterPro" id="IPR025857">
    <property type="entry name" value="MacB_PCD"/>
</dbReference>
<dbReference type="InterPro" id="IPR050250">
    <property type="entry name" value="Macrolide_Exporter_MacB"/>
</dbReference>
<dbReference type="InterPro" id="IPR027417">
    <property type="entry name" value="P-loop_NTPase"/>
</dbReference>
<dbReference type="NCBIfam" id="NF007826">
    <property type="entry name" value="PRK10535.1"/>
    <property type="match status" value="1"/>
</dbReference>
<dbReference type="PANTHER" id="PTHR30572:SF7">
    <property type="entry name" value="MACROLIDE EXPORT ATP-BINDING_PERMEASE PROTEIN MACB"/>
    <property type="match status" value="1"/>
</dbReference>
<dbReference type="PANTHER" id="PTHR30572">
    <property type="entry name" value="MEMBRANE COMPONENT OF TRANSPORTER-RELATED"/>
    <property type="match status" value="1"/>
</dbReference>
<dbReference type="Pfam" id="PF00005">
    <property type="entry name" value="ABC_tran"/>
    <property type="match status" value="1"/>
</dbReference>
<dbReference type="Pfam" id="PF02687">
    <property type="entry name" value="FtsX"/>
    <property type="match status" value="1"/>
</dbReference>
<dbReference type="Pfam" id="PF12704">
    <property type="entry name" value="MacB_PCD"/>
    <property type="match status" value="1"/>
</dbReference>
<dbReference type="SMART" id="SM00382">
    <property type="entry name" value="AAA"/>
    <property type="match status" value="1"/>
</dbReference>
<dbReference type="SUPFAM" id="SSF52540">
    <property type="entry name" value="P-loop containing nucleoside triphosphate hydrolases"/>
    <property type="match status" value="1"/>
</dbReference>
<dbReference type="PROSITE" id="PS00211">
    <property type="entry name" value="ABC_TRANSPORTER_1"/>
    <property type="match status" value="1"/>
</dbReference>
<dbReference type="PROSITE" id="PS50893">
    <property type="entry name" value="ABC_TRANSPORTER_2"/>
    <property type="match status" value="1"/>
</dbReference>
<dbReference type="PROSITE" id="PS51267">
    <property type="entry name" value="MACB"/>
    <property type="match status" value="1"/>
</dbReference>
<reference key="1">
    <citation type="journal article" date="2006" name="J. Bacteriol.">
        <title>Complete genome sequence of Yersinia pestis strains Antiqua and Nepal516: evidence of gene reduction in an emerging pathogen.</title>
        <authorList>
            <person name="Chain P.S.G."/>
            <person name="Hu P."/>
            <person name="Malfatti S.A."/>
            <person name="Radnedge L."/>
            <person name="Larimer F."/>
            <person name="Vergez L.M."/>
            <person name="Worsham P."/>
            <person name="Chu M.C."/>
            <person name="Andersen G.L."/>
        </authorList>
    </citation>
    <scope>NUCLEOTIDE SEQUENCE [LARGE SCALE GENOMIC DNA]</scope>
    <source>
        <strain>Nepal516</strain>
    </source>
</reference>
<reference key="2">
    <citation type="submission" date="2009-04" db="EMBL/GenBank/DDBJ databases">
        <title>Yersinia pestis Nepal516A whole genome shotgun sequencing project.</title>
        <authorList>
            <person name="Plunkett G. III"/>
            <person name="Anderson B.D."/>
            <person name="Baumler D.J."/>
            <person name="Burland V."/>
            <person name="Cabot E.L."/>
            <person name="Glasner J.D."/>
            <person name="Mau B."/>
            <person name="Neeno-Eckwall E."/>
            <person name="Perna N.T."/>
            <person name="Munk A.C."/>
            <person name="Tapia R."/>
            <person name="Green L.D."/>
            <person name="Rogers Y.C."/>
            <person name="Detter J.C."/>
            <person name="Bruce D.C."/>
            <person name="Brettin T.S."/>
        </authorList>
    </citation>
    <scope>NUCLEOTIDE SEQUENCE [LARGE SCALE GENOMIC DNA]</scope>
    <source>
        <strain>Nepal516</strain>
    </source>
</reference>
<comment type="function">
    <text evidence="1">Part of the tripartite efflux system MacAB-TolC. MacB is a non-canonical ABC transporter that contains transmembrane domains (TMD), which form a pore in the inner membrane, and an ATP-binding domain (NBD), which is responsible for energy generation. Confers resistance against macrolides.</text>
</comment>
<comment type="subunit">
    <text evidence="1">Homodimer. Part of the tripartite efflux system MacAB-TolC, which is composed of an inner membrane transporter, MacB, a periplasmic membrane fusion protein, MacA, and an outer membrane component, TolC. The complex forms a large protein conduit and can translocate molecules across both the inner and outer membranes. Interacts with MacA.</text>
</comment>
<comment type="subcellular location">
    <subcellularLocation>
        <location evidence="1">Cell inner membrane</location>
        <topology evidence="1">Multi-pass membrane protein</topology>
    </subcellularLocation>
</comment>
<comment type="similarity">
    <text evidence="1">Belongs to the ABC transporter superfamily. Macrolide exporter (TC 3.A.1.122) family.</text>
</comment>
<feature type="chain" id="PRO_0000269991" description="Macrolide export ATP-binding/permease protein MacB 2">
    <location>
        <begin position="1"/>
        <end position="649"/>
    </location>
</feature>
<feature type="transmembrane region" description="Helical" evidence="1">
    <location>
        <begin position="274"/>
        <end position="294"/>
    </location>
</feature>
<feature type="transmembrane region" description="Helical" evidence="1">
    <location>
        <begin position="420"/>
        <end position="440"/>
    </location>
</feature>
<feature type="transmembrane region" description="Helical" evidence="1">
    <location>
        <begin position="524"/>
        <end position="544"/>
    </location>
</feature>
<feature type="transmembrane region" description="Helical" evidence="1">
    <location>
        <begin position="578"/>
        <end position="598"/>
    </location>
</feature>
<feature type="transmembrane region" description="Helical" evidence="1">
    <location>
        <begin position="608"/>
        <end position="628"/>
    </location>
</feature>
<feature type="domain" description="ABC transporter" evidence="1">
    <location>
        <begin position="5"/>
        <end position="243"/>
    </location>
</feature>
<feature type="binding site" evidence="1">
    <location>
        <begin position="41"/>
        <end position="48"/>
    </location>
    <ligand>
        <name>ATP</name>
        <dbReference type="ChEBI" id="CHEBI:30616"/>
    </ligand>
</feature>
<accession>Q1CGD7</accession>
<accession>C4GVW3</accession>
<protein>
    <recommendedName>
        <fullName evidence="1">Macrolide export ATP-binding/permease protein MacB 2</fullName>
        <ecNumber evidence="1">7.6.2.-</ecNumber>
    </recommendedName>
</protein>